<reference key="1">
    <citation type="journal article" date="2007" name="PLoS Genet.">
        <title>Patterns and implications of gene gain and loss in the evolution of Prochlorococcus.</title>
        <authorList>
            <person name="Kettler G.C."/>
            <person name="Martiny A.C."/>
            <person name="Huang K."/>
            <person name="Zucker J."/>
            <person name="Coleman M.L."/>
            <person name="Rodrigue S."/>
            <person name="Chen F."/>
            <person name="Lapidus A."/>
            <person name="Ferriera S."/>
            <person name="Johnson J."/>
            <person name="Steglich C."/>
            <person name="Church G.M."/>
            <person name="Richardson P."/>
            <person name="Chisholm S.W."/>
        </authorList>
    </citation>
    <scope>NUCLEOTIDE SEQUENCE [LARGE SCALE GENOMIC DNA]</scope>
    <source>
        <strain>MIT 9515</strain>
    </source>
</reference>
<feature type="chain" id="PRO_1000049587" description="Cytochrome b6-f complex subunit 7">
    <location>
        <begin position="1"/>
        <end position="32"/>
    </location>
</feature>
<feature type="transmembrane region" description="Helical" evidence="1">
    <location>
        <begin position="9"/>
        <end position="27"/>
    </location>
</feature>
<sequence>MAKEIFSIAAVFWILIPIGLVGGALLLKFQGD</sequence>
<comment type="function">
    <text evidence="1">Component of the cytochrome b6-f complex, which mediates electron transfer between photosystem II (PSII) and photosystem I (PSI), cyclic electron flow around PSI, and state transitions.</text>
</comment>
<comment type="subunit">
    <text evidence="1">The 4 large subunits of the cytochrome b6-f complex are cytochrome b6, subunit IV (17 kDa polypeptide, PetD), cytochrome f and the Rieske protein, while the 4 small subunits are PetG, PetL, PetM and PetN. The complex functions as a dimer.</text>
</comment>
<comment type="subcellular location">
    <subcellularLocation>
        <location evidence="1">Cellular thylakoid membrane</location>
        <topology evidence="1">Single-pass membrane protein</topology>
    </subcellularLocation>
</comment>
<comment type="similarity">
    <text evidence="1">Belongs to the PetM family.</text>
</comment>
<protein>
    <recommendedName>
        <fullName evidence="1">Cytochrome b6-f complex subunit 7</fullName>
    </recommendedName>
    <alternativeName>
        <fullName evidence="1">Cytochrome b6-f complex subunit PetM</fullName>
    </alternativeName>
    <alternativeName>
        <fullName evidence="1">Cytochrome b6-f complex subunit VII</fullName>
    </alternativeName>
</protein>
<proteinExistence type="inferred from homology"/>
<gene>
    <name evidence="1" type="primary">petM</name>
    <name type="ordered locus">P9515_13191</name>
</gene>
<organism>
    <name type="scientific">Prochlorococcus marinus (strain MIT 9515)</name>
    <dbReference type="NCBI Taxonomy" id="167542"/>
    <lineage>
        <taxon>Bacteria</taxon>
        <taxon>Bacillati</taxon>
        <taxon>Cyanobacteriota</taxon>
        <taxon>Cyanophyceae</taxon>
        <taxon>Synechococcales</taxon>
        <taxon>Prochlorococcaceae</taxon>
        <taxon>Prochlorococcus</taxon>
    </lineage>
</organism>
<dbReference type="EMBL" id="CP000552">
    <property type="protein sequence ID" value="ABM72526.1"/>
    <property type="molecule type" value="Genomic_DNA"/>
</dbReference>
<dbReference type="RefSeq" id="WP_011132786.1">
    <property type="nucleotide sequence ID" value="NC_008817.1"/>
</dbReference>
<dbReference type="SMR" id="A2BXL5"/>
<dbReference type="STRING" id="167542.P9515_13191"/>
<dbReference type="GeneID" id="60201210"/>
<dbReference type="KEGG" id="pmc:P9515_13191"/>
<dbReference type="HOGENOM" id="CLU_216743_1_0_3"/>
<dbReference type="OrthoDB" id="541882at2"/>
<dbReference type="Proteomes" id="UP000001589">
    <property type="component" value="Chromosome"/>
</dbReference>
<dbReference type="GO" id="GO:0009512">
    <property type="term" value="C:cytochrome b6f complex"/>
    <property type="evidence" value="ECO:0007669"/>
    <property type="project" value="InterPro"/>
</dbReference>
<dbReference type="GO" id="GO:0031676">
    <property type="term" value="C:plasma membrane-derived thylakoid membrane"/>
    <property type="evidence" value="ECO:0007669"/>
    <property type="project" value="UniProtKB-SubCell"/>
</dbReference>
<dbReference type="GO" id="GO:0009055">
    <property type="term" value="F:electron transfer activity"/>
    <property type="evidence" value="ECO:0007669"/>
    <property type="project" value="UniProtKB-UniRule"/>
</dbReference>
<dbReference type="GO" id="GO:0015979">
    <property type="term" value="P:photosynthesis"/>
    <property type="evidence" value="ECO:0007669"/>
    <property type="project" value="UniProtKB-KW"/>
</dbReference>
<dbReference type="HAMAP" id="MF_00396">
    <property type="entry name" value="Cytb6_f_PetM"/>
    <property type="match status" value="1"/>
</dbReference>
<dbReference type="InterPro" id="IPR012595">
    <property type="entry name" value="PetM_cyt_b6/f_cplx_su7"/>
</dbReference>
<dbReference type="NCBIfam" id="NF008826">
    <property type="entry name" value="PRK11876.1-2"/>
    <property type="match status" value="1"/>
</dbReference>
<dbReference type="Pfam" id="PF08041">
    <property type="entry name" value="PetM"/>
    <property type="match status" value="1"/>
</dbReference>
<evidence type="ECO:0000255" key="1">
    <source>
        <dbReference type="HAMAP-Rule" id="MF_00396"/>
    </source>
</evidence>
<name>PETM_PROM5</name>
<accession>A2BXL5</accession>
<keyword id="KW-0249">Electron transport</keyword>
<keyword id="KW-0472">Membrane</keyword>
<keyword id="KW-0602">Photosynthesis</keyword>
<keyword id="KW-0793">Thylakoid</keyword>
<keyword id="KW-0812">Transmembrane</keyword>
<keyword id="KW-1133">Transmembrane helix</keyword>
<keyword id="KW-0813">Transport</keyword>